<organism>
    <name type="scientific">Pseudomonas aeruginosa (strain ATCC 15692 / DSM 22644 / CIP 104116 / JCM 14847 / LMG 12228 / 1C / PRS 101 / PAO1)</name>
    <dbReference type="NCBI Taxonomy" id="208964"/>
    <lineage>
        <taxon>Bacteria</taxon>
        <taxon>Pseudomonadati</taxon>
        <taxon>Pseudomonadota</taxon>
        <taxon>Gammaproteobacteria</taxon>
        <taxon>Pseudomonadales</taxon>
        <taxon>Pseudomonadaceae</taxon>
        <taxon>Pseudomonas</taxon>
    </lineage>
</organism>
<proteinExistence type="inferred from homology"/>
<name>YQGF_PSEAE</name>
<gene>
    <name type="ordered locus">PA0404</name>
</gene>
<sequence length="144" mass="15955">MASDKPLRLLLGFDYGTRQIGVAVGQAVTGQARELCVLKAQNGVPDWNRVEALIKEWQPDAIVVGLPLNMDGSPSEMSERAEKFGRRLNGRFNLPVFTHDERLTTYAAKGERLAQGQRDGYRERPVDALAAALLLEGWLAEHPD</sequence>
<accession>Q9I699</accession>
<dbReference type="EC" id="3.1.-.-" evidence="1"/>
<dbReference type="EMBL" id="AE004091">
    <property type="protein sequence ID" value="AAG03793.1"/>
    <property type="molecule type" value="Genomic_DNA"/>
</dbReference>
<dbReference type="PIR" id="B83596">
    <property type="entry name" value="B83596"/>
</dbReference>
<dbReference type="RefSeq" id="NP_249095.1">
    <property type="nucleotide sequence ID" value="NC_002516.2"/>
</dbReference>
<dbReference type="SMR" id="Q9I699"/>
<dbReference type="FunCoup" id="Q9I699">
    <property type="interactions" value="383"/>
</dbReference>
<dbReference type="STRING" id="208964.PA0404"/>
<dbReference type="PaxDb" id="208964-PA0404"/>
<dbReference type="GeneID" id="878247"/>
<dbReference type="KEGG" id="pae:PA0404"/>
<dbReference type="PATRIC" id="fig|208964.12.peg.425"/>
<dbReference type="PseudoCAP" id="PA0404"/>
<dbReference type="HOGENOM" id="CLU_098240_3_0_6"/>
<dbReference type="InParanoid" id="Q9I699"/>
<dbReference type="OrthoDB" id="9796140at2"/>
<dbReference type="PhylomeDB" id="Q9I699"/>
<dbReference type="BioCyc" id="PAER208964:G1FZ6-408-MONOMER"/>
<dbReference type="Proteomes" id="UP000002438">
    <property type="component" value="Chromosome"/>
</dbReference>
<dbReference type="GO" id="GO:0005737">
    <property type="term" value="C:cytoplasm"/>
    <property type="evidence" value="ECO:0007669"/>
    <property type="project" value="UniProtKB-SubCell"/>
</dbReference>
<dbReference type="GO" id="GO:0004518">
    <property type="term" value="F:nuclease activity"/>
    <property type="evidence" value="ECO:0007669"/>
    <property type="project" value="UniProtKB-KW"/>
</dbReference>
<dbReference type="GO" id="GO:0000967">
    <property type="term" value="P:rRNA 5'-end processing"/>
    <property type="evidence" value="ECO:0000318"/>
    <property type="project" value="GO_Central"/>
</dbReference>
<dbReference type="CDD" id="cd16964">
    <property type="entry name" value="YqgF"/>
    <property type="match status" value="1"/>
</dbReference>
<dbReference type="FunFam" id="3.30.420.140:FF:000002">
    <property type="entry name" value="Putative pre-16S rRNA nuclease"/>
    <property type="match status" value="1"/>
</dbReference>
<dbReference type="Gene3D" id="3.30.420.140">
    <property type="entry name" value="YqgF/RNase H-like domain"/>
    <property type="match status" value="1"/>
</dbReference>
<dbReference type="HAMAP" id="MF_00651">
    <property type="entry name" value="Nuclease_YqgF"/>
    <property type="match status" value="1"/>
</dbReference>
<dbReference type="InterPro" id="IPR012337">
    <property type="entry name" value="RNaseH-like_sf"/>
</dbReference>
<dbReference type="InterPro" id="IPR005227">
    <property type="entry name" value="YqgF"/>
</dbReference>
<dbReference type="InterPro" id="IPR006641">
    <property type="entry name" value="YqgF/RNaseH-like_dom"/>
</dbReference>
<dbReference type="InterPro" id="IPR037027">
    <property type="entry name" value="YqgF/RNaseH-like_dom_sf"/>
</dbReference>
<dbReference type="NCBIfam" id="TIGR00250">
    <property type="entry name" value="RNAse_H_YqgF"/>
    <property type="match status" value="1"/>
</dbReference>
<dbReference type="PANTHER" id="PTHR33317">
    <property type="entry name" value="POLYNUCLEOTIDYL TRANSFERASE, RIBONUCLEASE H-LIKE SUPERFAMILY PROTEIN"/>
    <property type="match status" value="1"/>
</dbReference>
<dbReference type="PANTHER" id="PTHR33317:SF4">
    <property type="entry name" value="POLYNUCLEOTIDYL TRANSFERASE, RIBONUCLEASE H-LIKE SUPERFAMILY PROTEIN"/>
    <property type="match status" value="1"/>
</dbReference>
<dbReference type="Pfam" id="PF03652">
    <property type="entry name" value="RuvX"/>
    <property type="match status" value="1"/>
</dbReference>
<dbReference type="SMART" id="SM00732">
    <property type="entry name" value="YqgFc"/>
    <property type="match status" value="1"/>
</dbReference>
<dbReference type="SUPFAM" id="SSF53098">
    <property type="entry name" value="Ribonuclease H-like"/>
    <property type="match status" value="1"/>
</dbReference>
<comment type="function">
    <text evidence="1">Could be a nuclease involved in processing of the 5'-end of pre-16S rRNA.</text>
</comment>
<comment type="subcellular location">
    <subcellularLocation>
        <location evidence="1">Cytoplasm</location>
    </subcellularLocation>
</comment>
<comment type="similarity">
    <text evidence="1">Belongs to the YqgF nuclease family.</text>
</comment>
<reference key="1">
    <citation type="journal article" date="2000" name="Nature">
        <title>Complete genome sequence of Pseudomonas aeruginosa PAO1, an opportunistic pathogen.</title>
        <authorList>
            <person name="Stover C.K."/>
            <person name="Pham X.-Q.T."/>
            <person name="Erwin A.L."/>
            <person name="Mizoguchi S.D."/>
            <person name="Warrener P."/>
            <person name="Hickey M.J."/>
            <person name="Brinkman F.S.L."/>
            <person name="Hufnagle W.O."/>
            <person name="Kowalik D.J."/>
            <person name="Lagrou M."/>
            <person name="Garber R.L."/>
            <person name="Goltry L."/>
            <person name="Tolentino E."/>
            <person name="Westbrock-Wadman S."/>
            <person name="Yuan Y."/>
            <person name="Brody L.L."/>
            <person name="Coulter S.N."/>
            <person name="Folger K.R."/>
            <person name="Kas A."/>
            <person name="Larbig K."/>
            <person name="Lim R.M."/>
            <person name="Smith K.A."/>
            <person name="Spencer D.H."/>
            <person name="Wong G.K.-S."/>
            <person name="Wu Z."/>
            <person name="Paulsen I.T."/>
            <person name="Reizer J."/>
            <person name="Saier M.H. Jr."/>
            <person name="Hancock R.E.W."/>
            <person name="Lory S."/>
            <person name="Olson M.V."/>
        </authorList>
    </citation>
    <scope>NUCLEOTIDE SEQUENCE [LARGE SCALE GENOMIC DNA]</scope>
    <source>
        <strain>ATCC 15692 / DSM 22644 / CIP 104116 / JCM 14847 / LMG 12228 / 1C / PRS 101 / PAO1</strain>
    </source>
</reference>
<feature type="chain" id="PRO_0000172118" description="Putative pre-16S rRNA nuclease">
    <location>
        <begin position="1"/>
        <end position="144"/>
    </location>
</feature>
<protein>
    <recommendedName>
        <fullName evidence="1">Putative pre-16S rRNA nuclease</fullName>
        <ecNumber evidence="1">3.1.-.-</ecNumber>
    </recommendedName>
</protein>
<keyword id="KW-0963">Cytoplasm</keyword>
<keyword id="KW-0378">Hydrolase</keyword>
<keyword id="KW-0540">Nuclease</keyword>
<keyword id="KW-1185">Reference proteome</keyword>
<keyword id="KW-0690">Ribosome biogenesis</keyword>
<evidence type="ECO:0000255" key="1">
    <source>
        <dbReference type="HAMAP-Rule" id="MF_00651"/>
    </source>
</evidence>